<gene>
    <name evidence="1" type="primary">rpmA</name>
    <name evidence="1" type="synonym">rpl27</name>
    <name type="ordered locus">PMT_1421</name>
</gene>
<organism>
    <name type="scientific">Prochlorococcus marinus (strain MIT 9313)</name>
    <dbReference type="NCBI Taxonomy" id="74547"/>
    <lineage>
        <taxon>Bacteria</taxon>
        <taxon>Bacillati</taxon>
        <taxon>Cyanobacteriota</taxon>
        <taxon>Cyanophyceae</taxon>
        <taxon>Synechococcales</taxon>
        <taxon>Prochlorococcaceae</taxon>
        <taxon>Prochlorococcus</taxon>
    </lineage>
</organism>
<comment type="similarity">
    <text evidence="1">Belongs to the bacterial ribosomal protein bL27 family.</text>
</comment>
<name>RL27_PROMM</name>
<evidence type="ECO:0000255" key="1">
    <source>
        <dbReference type="HAMAP-Rule" id="MF_00539"/>
    </source>
</evidence>
<evidence type="ECO:0000256" key="2">
    <source>
        <dbReference type="SAM" id="MobiDB-lite"/>
    </source>
</evidence>
<evidence type="ECO:0000305" key="3"/>
<reference key="1">
    <citation type="journal article" date="2003" name="Nature">
        <title>Genome divergence in two Prochlorococcus ecotypes reflects oceanic niche differentiation.</title>
        <authorList>
            <person name="Rocap G."/>
            <person name="Larimer F.W."/>
            <person name="Lamerdin J.E."/>
            <person name="Malfatti S."/>
            <person name="Chain P."/>
            <person name="Ahlgren N.A."/>
            <person name="Arellano A."/>
            <person name="Coleman M."/>
            <person name="Hauser L."/>
            <person name="Hess W.R."/>
            <person name="Johnson Z.I."/>
            <person name="Land M.L."/>
            <person name="Lindell D."/>
            <person name="Post A.F."/>
            <person name="Regala W."/>
            <person name="Shah M."/>
            <person name="Shaw S.L."/>
            <person name="Steglich C."/>
            <person name="Sullivan M.B."/>
            <person name="Ting C.S."/>
            <person name="Tolonen A."/>
            <person name="Webb E.A."/>
            <person name="Zinser E.R."/>
            <person name="Chisholm S.W."/>
        </authorList>
    </citation>
    <scope>NUCLEOTIDE SEQUENCE [LARGE SCALE GENOMIC DNA]</scope>
    <source>
        <strain>MIT 9313</strain>
    </source>
</reference>
<keyword id="KW-1185">Reference proteome</keyword>
<keyword id="KW-0687">Ribonucleoprotein</keyword>
<keyword id="KW-0689">Ribosomal protein</keyword>
<sequence length="88" mass="9317">MAHKKGTGSTRNGRDSNSKRLGVKAYGGETVTAGSILIRQRGTSVLPGVNVGQGKDDTLFALTDGVVAFESIRRSLRNRKRISVVASS</sequence>
<dbReference type="EMBL" id="BX548175">
    <property type="protein sequence ID" value="CAE21596.1"/>
    <property type="molecule type" value="Genomic_DNA"/>
</dbReference>
<dbReference type="RefSeq" id="WP_011130789.1">
    <property type="nucleotide sequence ID" value="NC_005071.1"/>
</dbReference>
<dbReference type="SMR" id="Q7V5W4"/>
<dbReference type="KEGG" id="pmt:PMT_1421"/>
<dbReference type="eggNOG" id="COG0211">
    <property type="taxonomic scope" value="Bacteria"/>
</dbReference>
<dbReference type="HOGENOM" id="CLU_095424_4_0_3"/>
<dbReference type="OrthoDB" id="9803474at2"/>
<dbReference type="Proteomes" id="UP000001423">
    <property type="component" value="Chromosome"/>
</dbReference>
<dbReference type="GO" id="GO:0022625">
    <property type="term" value="C:cytosolic large ribosomal subunit"/>
    <property type="evidence" value="ECO:0007669"/>
    <property type="project" value="TreeGrafter"/>
</dbReference>
<dbReference type="GO" id="GO:0003735">
    <property type="term" value="F:structural constituent of ribosome"/>
    <property type="evidence" value="ECO:0007669"/>
    <property type="project" value="InterPro"/>
</dbReference>
<dbReference type="GO" id="GO:0006412">
    <property type="term" value="P:translation"/>
    <property type="evidence" value="ECO:0007669"/>
    <property type="project" value="UniProtKB-UniRule"/>
</dbReference>
<dbReference type="FunFam" id="2.40.50.100:FF:000004">
    <property type="entry name" value="50S ribosomal protein L27"/>
    <property type="match status" value="1"/>
</dbReference>
<dbReference type="Gene3D" id="2.40.50.100">
    <property type="match status" value="1"/>
</dbReference>
<dbReference type="HAMAP" id="MF_00539">
    <property type="entry name" value="Ribosomal_bL27"/>
    <property type="match status" value="1"/>
</dbReference>
<dbReference type="InterPro" id="IPR001684">
    <property type="entry name" value="Ribosomal_bL27"/>
</dbReference>
<dbReference type="InterPro" id="IPR018261">
    <property type="entry name" value="Ribosomal_bL27_CS"/>
</dbReference>
<dbReference type="NCBIfam" id="TIGR00062">
    <property type="entry name" value="L27"/>
    <property type="match status" value="1"/>
</dbReference>
<dbReference type="PANTHER" id="PTHR15893:SF0">
    <property type="entry name" value="LARGE RIBOSOMAL SUBUNIT PROTEIN BL27M"/>
    <property type="match status" value="1"/>
</dbReference>
<dbReference type="PANTHER" id="PTHR15893">
    <property type="entry name" value="RIBOSOMAL PROTEIN L27"/>
    <property type="match status" value="1"/>
</dbReference>
<dbReference type="Pfam" id="PF01016">
    <property type="entry name" value="Ribosomal_L27"/>
    <property type="match status" value="1"/>
</dbReference>
<dbReference type="PRINTS" id="PR00063">
    <property type="entry name" value="RIBOSOMALL27"/>
</dbReference>
<dbReference type="SUPFAM" id="SSF110324">
    <property type="entry name" value="Ribosomal L27 protein-like"/>
    <property type="match status" value="1"/>
</dbReference>
<dbReference type="PROSITE" id="PS00831">
    <property type="entry name" value="RIBOSOMAL_L27"/>
    <property type="match status" value="1"/>
</dbReference>
<feature type="chain" id="PRO_0000181145" description="Large ribosomal subunit protein bL27">
    <location>
        <begin position="1"/>
        <end position="88"/>
    </location>
</feature>
<feature type="region of interest" description="Disordered" evidence="2">
    <location>
        <begin position="1"/>
        <end position="24"/>
    </location>
</feature>
<accession>Q7V5W4</accession>
<protein>
    <recommendedName>
        <fullName evidence="1">Large ribosomal subunit protein bL27</fullName>
    </recommendedName>
    <alternativeName>
        <fullName evidence="3">50S ribosomal protein L27</fullName>
    </alternativeName>
</protein>
<proteinExistence type="inferred from homology"/>